<keyword id="KW-0002">3D-structure</keyword>
<keyword id="KW-1015">Disulfide bond</keyword>
<keyword id="KW-0249">Electron transport</keyword>
<keyword id="KW-0560">Oxidoreductase</keyword>
<keyword id="KW-0574">Periplasm</keyword>
<keyword id="KW-0732">Signal</keyword>
<keyword id="KW-0813">Transport</keyword>
<gene>
    <name type="primary">mauB</name>
    <name type="synonym">madA</name>
</gene>
<dbReference type="EC" id="1.4.9.1"/>
<dbReference type="EMBL" id="L08575">
    <property type="protein sequence ID" value="AAA72335.1"/>
    <property type="molecule type" value="Genomic_DNA"/>
</dbReference>
<dbReference type="PIR" id="A36934">
    <property type="entry name" value="A36934"/>
</dbReference>
<dbReference type="RefSeq" id="WP_036750437.1">
    <property type="nucleotide sequence ID" value="NZ_QUMX01000042.1"/>
</dbReference>
<dbReference type="PDB" id="1MAE">
    <property type="method" value="X-ray"/>
    <property type="resolution" value="2.80 A"/>
    <property type="chains" value="H=59-400"/>
</dbReference>
<dbReference type="PDB" id="1MAF">
    <property type="method" value="X-ray"/>
    <property type="resolution" value="2.60 A"/>
    <property type="chains" value="H=59-400"/>
</dbReference>
<dbReference type="PDB" id="2MAD">
    <property type="method" value="X-ray"/>
    <property type="resolution" value="2.25 A"/>
    <property type="chains" value="H=59-400"/>
</dbReference>
<dbReference type="PDB" id="3C75">
    <property type="method" value="X-ray"/>
    <property type="resolution" value="2.50 A"/>
    <property type="chains" value="H/J=1-426"/>
</dbReference>
<dbReference type="PDBsum" id="1MAE"/>
<dbReference type="PDBsum" id="1MAF"/>
<dbReference type="PDBsum" id="2MAD"/>
<dbReference type="PDBsum" id="3C75"/>
<dbReference type="SMR" id="P23006"/>
<dbReference type="eggNOG" id="COG3391">
    <property type="taxonomic scope" value="Bacteria"/>
</dbReference>
<dbReference type="BioCyc" id="MetaCyc:MONOMER-3901"/>
<dbReference type="EvolutionaryTrace" id="P23006"/>
<dbReference type="GO" id="GO:0042597">
    <property type="term" value="C:periplasmic space"/>
    <property type="evidence" value="ECO:0007669"/>
    <property type="project" value="UniProtKB-SubCell"/>
</dbReference>
<dbReference type="GO" id="GO:0030058">
    <property type="term" value="F:aliphatic amine dehydrogenase activity"/>
    <property type="evidence" value="ECO:0007669"/>
    <property type="project" value="InterPro"/>
</dbReference>
<dbReference type="GO" id="GO:0052876">
    <property type="term" value="F:methylamine dehydrogenase (amicyanin) activity"/>
    <property type="evidence" value="ECO:0007669"/>
    <property type="project" value="UniProtKB-EC"/>
</dbReference>
<dbReference type="GO" id="GO:0030416">
    <property type="term" value="P:methylamine metabolic process"/>
    <property type="evidence" value="ECO:0007669"/>
    <property type="project" value="InterPro"/>
</dbReference>
<dbReference type="Gene3D" id="2.130.10.10">
    <property type="entry name" value="YVTN repeat-like/Quinoprotein amine dehydrogenase"/>
    <property type="match status" value="1"/>
</dbReference>
<dbReference type="InterPro" id="IPR013476">
    <property type="entry name" value="MeN_DH_Hvc"/>
</dbReference>
<dbReference type="InterPro" id="IPR009451">
    <property type="entry name" value="Metamine_DH_Hvc"/>
</dbReference>
<dbReference type="InterPro" id="IPR011044">
    <property type="entry name" value="Quino_amine_DH_bsu"/>
</dbReference>
<dbReference type="InterPro" id="IPR015943">
    <property type="entry name" value="WD40/YVTN_repeat-like_dom_sf"/>
</dbReference>
<dbReference type="NCBIfam" id="TIGR02658">
    <property type="entry name" value="TTQ_MADH_Hv"/>
    <property type="match status" value="1"/>
</dbReference>
<dbReference type="Pfam" id="PF06433">
    <property type="entry name" value="Me-amine-dh_H"/>
    <property type="match status" value="1"/>
</dbReference>
<dbReference type="SUPFAM" id="SSF50969">
    <property type="entry name" value="YVTN repeat-like/Quinoprotein amine dehydrogenase"/>
    <property type="match status" value="1"/>
</dbReference>
<comment type="function">
    <text>Methylamine dehydrogenase carries out the oxidation of methylamine. Electrons are passed from methylamine dehydrogenase to amicyanin.</text>
</comment>
<comment type="catalytic activity">
    <reaction>
        <text>2 oxidized [amicyanin] + methylamine + H2O = 2 reduced [amicyanin] + formaldehyde + NH4(+) + 2 H(+)</text>
        <dbReference type="Rhea" id="RHEA:30207"/>
        <dbReference type="Rhea" id="RHEA-COMP:11100"/>
        <dbReference type="Rhea" id="RHEA-COMP:11101"/>
        <dbReference type="ChEBI" id="CHEBI:15377"/>
        <dbReference type="ChEBI" id="CHEBI:15378"/>
        <dbReference type="ChEBI" id="CHEBI:16842"/>
        <dbReference type="ChEBI" id="CHEBI:28938"/>
        <dbReference type="ChEBI" id="CHEBI:29036"/>
        <dbReference type="ChEBI" id="CHEBI:49552"/>
        <dbReference type="ChEBI" id="CHEBI:59338"/>
        <dbReference type="EC" id="1.4.9.1"/>
    </reaction>
</comment>
<comment type="subunit">
    <text>Tetramer of two light and two heavy chains.</text>
</comment>
<comment type="subcellular location">
    <subcellularLocation>
        <location>Periplasm</location>
    </subcellularLocation>
</comment>
<comment type="similarity">
    <text evidence="3">Belongs to the aromatic amine dehydrogenase heavy chain family.</text>
</comment>
<name>DHMH_PARVE</name>
<accession>P23006</accession>
<accession>Q60052</accession>
<reference key="1">
    <citation type="journal article" date="1993" name="J. Bacteriol.">
        <title>Cloning and sequencing of the gene coding for the large subunit of methylamine dehydrogenase from Thiobacillus versutus.</title>
        <authorList>
            <person name="Huitema F."/>
            <person name="van Beeumen J."/>
            <person name="van Driessche G."/>
            <person name="Duine J.A."/>
            <person name="Canters G.W."/>
        </authorList>
    </citation>
    <scope>NUCLEOTIDE SEQUENCE [GENOMIC DNA]</scope>
</reference>
<reference key="2">
    <citation type="journal article" date="1989" name="EMBO J.">
        <title>Structure of quinoprotein methylamine dehydrogenase at 2.25-A resolution.</title>
        <authorList>
            <person name="Vellieux F.M.D."/>
            <person name="Huitema F."/>
            <person name="Groendijk H."/>
            <person name="Kalk K.H."/>
            <person name="Jzn J.F."/>
            <person name="Jongejan J.A."/>
            <person name="Duine J.A."/>
            <person name="Petratos K."/>
            <person name="Drenth J."/>
            <person name="Hol W.G.J."/>
        </authorList>
    </citation>
    <scope>X-RAY CRYSTALLOGRAPHY (2.25 ANGSTROMS)</scope>
</reference>
<reference key="3">
    <citation type="journal article" date="1990" name="Acta Crystallogr. B">
        <title>Structure determination of quinoprotein methylamine dehydrogenase from Thiobacillus versutus.</title>
        <authorList>
            <person name="Vellieux F.M.D."/>
            <person name="Kalk K.H."/>
            <person name="Hol W.G.J."/>
        </authorList>
    </citation>
    <scope>X-RAY CRYSTALLOGRAPHY (2.25 ANGSTROMS)</scope>
</reference>
<organism>
    <name type="scientific">Paracoccus versutus</name>
    <name type="common">Thiobacillus versutus</name>
    <dbReference type="NCBI Taxonomy" id="34007"/>
    <lineage>
        <taxon>Bacteria</taxon>
        <taxon>Pseudomonadati</taxon>
        <taxon>Pseudomonadota</taxon>
        <taxon>Alphaproteobacteria</taxon>
        <taxon>Rhodobacterales</taxon>
        <taxon>Paracoccaceae</taxon>
        <taxon>Paracoccus</taxon>
    </lineage>
</organism>
<sequence>MASARESTPRYLTLIGATLACSALALGAAQAQTEPAEPEAPAETAAADAAGQTEGQRGAAEAAAALAAGEADEPVILEAPAPDARRVYIQDPAHFAAITQQFVIDGSTGRILGMTDGGFLPHPVAAEDGSFFAQASTVFERIARGKRTDYVEVFDPVTFLPIADIELPDAPRFLVGTYQWMNALTPDNKNLLFYQFSPAPAVGVVDLEGKTFDRMLDVPDCYHIFPASPTVFYMNCRDGSLARVDFADGETKVTNTEVFHTEDELLINHPAFSLRSGRLVWPTYTGKIFQADLTAEGATFRAPIEALTEAERADDWRPGGWQQTAYHRQSDRIYLLVDQRDEWKHKAASRFVVVLNAETGERINKIELGHEIDSINVSQDAEPLLYALSAGTQTLHIYDAATGEELRSVDQLGRGPQIITTHDMDS</sequence>
<feature type="signal peptide" evidence="1">
    <location>
        <begin position="1"/>
        <end position="31"/>
    </location>
</feature>
<feature type="chain" id="PRO_0000025581" description="Methylamine dehydrogenase heavy chain">
    <location>
        <begin position="32"/>
        <end position="426"/>
    </location>
</feature>
<feature type="region of interest" description="Disordered" evidence="2">
    <location>
        <begin position="32"/>
        <end position="64"/>
    </location>
</feature>
<feature type="disulfide bond">
    <location>
        <begin position="221"/>
        <end position="236"/>
    </location>
</feature>
<feature type="helix" evidence="4">
    <location>
        <begin position="54"/>
        <end position="67"/>
    </location>
</feature>
<feature type="strand" evidence="4">
    <location>
        <begin position="86"/>
        <end position="91"/>
    </location>
</feature>
<feature type="turn" evidence="4">
    <location>
        <begin position="93"/>
        <end position="95"/>
    </location>
</feature>
<feature type="strand" evidence="4">
    <location>
        <begin position="97"/>
        <end position="105"/>
    </location>
</feature>
<feature type="turn" evidence="4">
    <location>
        <begin position="106"/>
        <end position="108"/>
    </location>
</feature>
<feature type="strand" evidence="4">
    <location>
        <begin position="111"/>
        <end position="117"/>
    </location>
</feature>
<feature type="strand" evidence="4">
    <location>
        <begin position="122"/>
        <end position="125"/>
    </location>
</feature>
<feature type="strand" evidence="4">
    <location>
        <begin position="132"/>
        <end position="141"/>
    </location>
</feature>
<feature type="strand" evidence="4">
    <location>
        <begin position="144"/>
        <end position="154"/>
    </location>
</feature>
<feature type="turn" evidence="4">
    <location>
        <begin position="156"/>
        <end position="158"/>
    </location>
</feature>
<feature type="strand" evidence="4">
    <location>
        <begin position="161"/>
        <end position="167"/>
    </location>
</feature>
<feature type="helix" evidence="4">
    <location>
        <begin position="179"/>
        <end position="181"/>
    </location>
</feature>
<feature type="strand" evidence="4">
    <location>
        <begin position="182"/>
        <end position="184"/>
    </location>
</feature>
<feature type="strand" evidence="4">
    <location>
        <begin position="188"/>
        <end position="195"/>
    </location>
</feature>
<feature type="strand" evidence="4">
    <location>
        <begin position="197"/>
        <end position="199"/>
    </location>
</feature>
<feature type="strand" evidence="4">
    <location>
        <begin position="201"/>
        <end position="206"/>
    </location>
</feature>
<feature type="turn" evidence="4">
    <location>
        <begin position="207"/>
        <end position="210"/>
    </location>
</feature>
<feature type="strand" evidence="4">
    <location>
        <begin position="211"/>
        <end position="217"/>
    </location>
</feature>
<feature type="strand" evidence="4">
    <location>
        <begin position="220"/>
        <end position="228"/>
    </location>
</feature>
<feature type="strand" evidence="4">
    <location>
        <begin position="231"/>
        <end position="236"/>
    </location>
</feature>
<feature type="strand" evidence="4">
    <location>
        <begin position="239"/>
        <end position="245"/>
    </location>
</feature>
<feature type="strand" evidence="4">
    <location>
        <begin position="252"/>
        <end position="255"/>
    </location>
</feature>
<feature type="turn" evidence="4">
    <location>
        <begin position="274"/>
        <end position="276"/>
    </location>
</feature>
<feature type="strand" evidence="4">
    <location>
        <begin position="278"/>
        <end position="283"/>
    </location>
</feature>
<feature type="strand" evidence="4">
    <location>
        <begin position="286"/>
        <end position="293"/>
    </location>
</feature>
<feature type="strand" evidence="4">
    <location>
        <begin position="298"/>
        <end position="300"/>
    </location>
</feature>
<feature type="strand" evidence="4">
    <location>
        <begin position="304"/>
        <end position="307"/>
    </location>
</feature>
<feature type="turn" evidence="4">
    <location>
        <begin position="309"/>
        <end position="311"/>
    </location>
</feature>
<feature type="helix" evidence="4">
    <location>
        <begin position="312"/>
        <end position="314"/>
    </location>
</feature>
<feature type="strand" evidence="4">
    <location>
        <begin position="316"/>
        <end position="318"/>
    </location>
</feature>
<feature type="strand" evidence="4">
    <location>
        <begin position="320"/>
        <end position="322"/>
    </location>
</feature>
<feature type="strand" evidence="4">
    <location>
        <begin position="324"/>
        <end position="327"/>
    </location>
</feature>
<feature type="turn" evidence="4">
    <location>
        <begin position="328"/>
        <end position="331"/>
    </location>
</feature>
<feature type="strand" evidence="4">
    <location>
        <begin position="332"/>
        <end position="339"/>
    </location>
</feature>
<feature type="strand" evidence="4">
    <location>
        <begin position="349"/>
        <end position="356"/>
    </location>
</feature>
<feature type="turn" evidence="4">
    <location>
        <begin position="357"/>
        <end position="359"/>
    </location>
</feature>
<feature type="strand" evidence="4">
    <location>
        <begin position="362"/>
        <end position="372"/>
    </location>
</feature>
<feature type="strand" evidence="4">
    <location>
        <begin position="374"/>
        <end position="377"/>
    </location>
</feature>
<feature type="strand" evidence="4">
    <location>
        <begin position="380"/>
        <end position="382"/>
    </location>
</feature>
<feature type="strand" evidence="4">
    <location>
        <begin position="384"/>
        <end position="389"/>
    </location>
</feature>
<feature type="turn" evidence="4">
    <location>
        <begin position="390"/>
        <end position="393"/>
    </location>
</feature>
<feature type="strand" evidence="4">
    <location>
        <begin position="394"/>
        <end position="399"/>
    </location>
</feature>
<feature type="turn" evidence="4">
    <location>
        <begin position="400"/>
        <end position="402"/>
    </location>
</feature>
<feature type="strand" evidence="4">
    <location>
        <begin position="405"/>
        <end position="409"/>
    </location>
</feature>
<feature type="strand" evidence="4">
    <location>
        <begin position="413"/>
        <end position="415"/>
    </location>
</feature>
<feature type="strand" evidence="4">
    <location>
        <begin position="418"/>
        <end position="420"/>
    </location>
</feature>
<protein>
    <recommendedName>
        <fullName>Methylamine dehydrogenase heavy chain</fullName>
        <shortName>MADH</shortName>
        <ecNumber>1.4.9.1</ecNumber>
    </recommendedName>
    <alternativeName>
        <fullName>Methylamine dehydrogenase (amicyanin)</fullName>
    </alternativeName>
</protein>
<evidence type="ECO:0000255" key="1"/>
<evidence type="ECO:0000256" key="2">
    <source>
        <dbReference type="SAM" id="MobiDB-lite"/>
    </source>
</evidence>
<evidence type="ECO:0000305" key="3"/>
<evidence type="ECO:0007829" key="4">
    <source>
        <dbReference type="PDB" id="3C75"/>
    </source>
</evidence>
<proteinExistence type="evidence at protein level"/>